<gene>
    <name type="ordered locus">CBO3003</name>
    <name type="ordered locus">CLC_2900</name>
</gene>
<sequence length="228" mass="25671">MDNNFKIKDLPKNERPQERLIRYGAEVLSNSELLAVILRTGTKNQNIMMLASSLIKETGGLDQLFNQSIEELTKIKGIGVTKAVQILALSELSKRFKTYKSGNEYKISTPLDVSNLVMEDMKYLKQEKLKILILNTKNIVTYIRDVFIGTLNSSIVHPREIFCEAIKKNGASIIICHNHPSGDPTPSKEDINITLRLKECGKLIGIDLLDHIIIGENKYVSMKEKGTI</sequence>
<organism>
    <name type="scientific">Clostridium botulinum (strain Hall / ATCC 3502 / NCTC 13319 / Type A)</name>
    <dbReference type="NCBI Taxonomy" id="441771"/>
    <lineage>
        <taxon>Bacteria</taxon>
        <taxon>Bacillati</taxon>
        <taxon>Bacillota</taxon>
        <taxon>Clostridia</taxon>
        <taxon>Eubacteriales</taxon>
        <taxon>Clostridiaceae</taxon>
        <taxon>Clostridium</taxon>
    </lineage>
</organism>
<proteinExistence type="inferred from homology"/>
<accession>A5I683</accession>
<accession>A7G7G6</accession>
<dbReference type="EMBL" id="CP000727">
    <property type="protein sequence ID" value="ABS38997.1"/>
    <property type="molecule type" value="Genomic_DNA"/>
</dbReference>
<dbReference type="EMBL" id="AM412317">
    <property type="protein sequence ID" value="CAL84565.1"/>
    <property type="molecule type" value="Genomic_DNA"/>
</dbReference>
<dbReference type="RefSeq" id="YP_001255495.1">
    <property type="nucleotide sequence ID" value="NC_009495.1"/>
</dbReference>
<dbReference type="RefSeq" id="YP_001388731.1">
    <property type="nucleotide sequence ID" value="NC_009698.1"/>
</dbReference>
<dbReference type="SMR" id="A5I683"/>
<dbReference type="GeneID" id="5185046"/>
<dbReference type="KEGG" id="cbh:CLC_2900"/>
<dbReference type="KEGG" id="cbo:CBO3003"/>
<dbReference type="PATRIC" id="fig|413999.7.peg.2981"/>
<dbReference type="HOGENOM" id="CLU_073529_0_2_9"/>
<dbReference type="PRO" id="PR:A5I683"/>
<dbReference type="Proteomes" id="UP000001986">
    <property type="component" value="Chromosome"/>
</dbReference>
<dbReference type="GO" id="GO:0046872">
    <property type="term" value="F:metal ion binding"/>
    <property type="evidence" value="ECO:0007669"/>
    <property type="project" value="UniProtKB-KW"/>
</dbReference>
<dbReference type="GO" id="GO:0008237">
    <property type="term" value="F:metallopeptidase activity"/>
    <property type="evidence" value="ECO:0007669"/>
    <property type="project" value="UniProtKB-KW"/>
</dbReference>
<dbReference type="GO" id="GO:0006508">
    <property type="term" value="P:proteolysis"/>
    <property type="evidence" value="ECO:0007669"/>
    <property type="project" value="UniProtKB-KW"/>
</dbReference>
<dbReference type="CDD" id="cd08071">
    <property type="entry name" value="MPN_DUF2466"/>
    <property type="match status" value="1"/>
</dbReference>
<dbReference type="Gene3D" id="1.10.150.20">
    <property type="entry name" value="5' to 3' exonuclease, C-terminal subdomain"/>
    <property type="match status" value="1"/>
</dbReference>
<dbReference type="Gene3D" id="3.40.140.10">
    <property type="entry name" value="Cytidine Deaminase, domain 2"/>
    <property type="match status" value="1"/>
</dbReference>
<dbReference type="InterPro" id="IPR037518">
    <property type="entry name" value="MPN"/>
</dbReference>
<dbReference type="InterPro" id="IPR025657">
    <property type="entry name" value="RadC_JAB"/>
</dbReference>
<dbReference type="InterPro" id="IPR010994">
    <property type="entry name" value="RuvA_2-like"/>
</dbReference>
<dbReference type="InterPro" id="IPR001405">
    <property type="entry name" value="UPF0758"/>
</dbReference>
<dbReference type="InterPro" id="IPR020891">
    <property type="entry name" value="UPF0758_CS"/>
</dbReference>
<dbReference type="InterPro" id="IPR046778">
    <property type="entry name" value="UPF0758_N"/>
</dbReference>
<dbReference type="NCBIfam" id="NF000642">
    <property type="entry name" value="PRK00024.1"/>
    <property type="match status" value="1"/>
</dbReference>
<dbReference type="NCBIfam" id="TIGR00608">
    <property type="entry name" value="radc"/>
    <property type="match status" value="1"/>
</dbReference>
<dbReference type="PANTHER" id="PTHR30471">
    <property type="entry name" value="DNA REPAIR PROTEIN RADC"/>
    <property type="match status" value="1"/>
</dbReference>
<dbReference type="PANTHER" id="PTHR30471:SF3">
    <property type="entry name" value="UPF0758 PROTEIN YEES-RELATED"/>
    <property type="match status" value="1"/>
</dbReference>
<dbReference type="Pfam" id="PF04002">
    <property type="entry name" value="RadC"/>
    <property type="match status" value="1"/>
</dbReference>
<dbReference type="Pfam" id="PF20582">
    <property type="entry name" value="UPF0758_N"/>
    <property type="match status" value="1"/>
</dbReference>
<dbReference type="SUPFAM" id="SSF102712">
    <property type="entry name" value="JAB1/MPN domain"/>
    <property type="match status" value="1"/>
</dbReference>
<dbReference type="SUPFAM" id="SSF47781">
    <property type="entry name" value="RuvA domain 2-like"/>
    <property type="match status" value="1"/>
</dbReference>
<dbReference type="PROSITE" id="PS50249">
    <property type="entry name" value="MPN"/>
    <property type="match status" value="1"/>
</dbReference>
<dbReference type="PROSITE" id="PS01302">
    <property type="entry name" value="UPF0758"/>
    <property type="match status" value="1"/>
</dbReference>
<reference key="1">
    <citation type="journal article" date="2007" name="Genome Res.">
        <title>Genome sequence of a proteolytic (Group I) Clostridium botulinum strain Hall A and comparative analysis of the clostridial genomes.</title>
        <authorList>
            <person name="Sebaihia M."/>
            <person name="Peck M.W."/>
            <person name="Minton N.P."/>
            <person name="Thomson N.R."/>
            <person name="Holden M.T.G."/>
            <person name="Mitchell W.J."/>
            <person name="Carter A.T."/>
            <person name="Bentley S.D."/>
            <person name="Mason D.R."/>
            <person name="Crossman L."/>
            <person name="Paul C.J."/>
            <person name="Ivens A."/>
            <person name="Wells-Bennik M.H.J."/>
            <person name="Davis I.J."/>
            <person name="Cerdeno-Tarraga A.M."/>
            <person name="Churcher C."/>
            <person name="Quail M.A."/>
            <person name="Chillingworth T."/>
            <person name="Feltwell T."/>
            <person name="Fraser A."/>
            <person name="Goodhead I."/>
            <person name="Hance Z."/>
            <person name="Jagels K."/>
            <person name="Larke N."/>
            <person name="Maddison M."/>
            <person name="Moule S."/>
            <person name="Mungall K."/>
            <person name="Norbertczak H."/>
            <person name="Rabbinowitsch E."/>
            <person name="Sanders M."/>
            <person name="Simmonds M."/>
            <person name="White B."/>
            <person name="Whithead S."/>
            <person name="Parkhill J."/>
        </authorList>
    </citation>
    <scope>NUCLEOTIDE SEQUENCE [LARGE SCALE GENOMIC DNA]</scope>
    <source>
        <strain>Hall / ATCC 3502 / NCTC 13319 / Type A</strain>
    </source>
</reference>
<reference key="2">
    <citation type="journal article" date="2007" name="PLoS ONE">
        <title>Analysis of the neurotoxin complex genes in Clostridium botulinum A1-A4 and B1 strains: BoNT/A3, /Ba4 and /B1 clusters are located within plasmids.</title>
        <authorList>
            <person name="Smith T.J."/>
            <person name="Hill K.K."/>
            <person name="Foley B.T."/>
            <person name="Detter J.C."/>
            <person name="Munk A.C."/>
            <person name="Bruce D.C."/>
            <person name="Doggett N.A."/>
            <person name="Smith L.A."/>
            <person name="Marks J.D."/>
            <person name="Xie G."/>
            <person name="Brettin T.S."/>
        </authorList>
    </citation>
    <scope>NUCLEOTIDE SEQUENCE [LARGE SCALE GENOMIC DNA]</scope>
    <source>
        <strain>Hall / ATCC 3502 / NCTC 13319 / Type A</strain>
    </source>
</reference>
<name>Y3003_CLOBH</name>
<evidence type="ECO:0000255" key="1">
    <source>
        <dbReference type="PROSITE-ProRule" id="PRU01182"/>
    </source>
</evidence>
<evidence type="ECO:0000305" key="2"/>
<comment type="similarity">
    <text evidence="2">Belongs to the UPF0758 family.</text>
</comment>
<keyword id="KW-0378">Hydrolase</keyword>
<keyword id="KW-0479">Metal-binding</keyword>
<keyword id="KW-0482">Metalloprotease</keyword>
<keyword id="KW-0645">Protease</keyword>
<keyword id="KW-1185">Reference proteome</keyword>
<keyword id="KW-0862">Zinc</keyword>
<protein>
    <recommendedName>
        <fullName>UPF0758 protein CBO3003/CLC_2900</fullName>
    </recommendedName>
</protein>
<feature type="chain" id="PRO_1000001651" description="UPF0758 protein CBO3003/CLC_2900">
    <location>
        <begin position="1"/>
        <end position="228"/>
    </location>
</feature>
<feature type="domain" description="MPN" evidence="1">
    <location>
        <begin position="106"/>
        <end position="228"/>
    </location>
</feature>
<feature type="short sequence motif" description="JAMM motif" evidence="1">
    <location>
        <begin position="177"/>
        <end position="190"/>
    </location>
</feature>
<feature type="binding site" evidence="1">
    <location>
        <position position="177"/>
    </location>
    <ligand>
        <name>Zn(2+)</name>
        <dbReference type="ChEBI" id="CHEBI:29105"/>
        <note>catalytic</note>
    </ligand>
</feature>
<feature type="binding site" evidence="1">
    <location>
        <position position="179"/>
    </location>
    <ligand>
        <name>Zn(2+)</name>
        <dbReference type="ChEBI" id="CHEBI:29105"/>
        <note>catalytic</note>
    </ligand>
</feature>
<feature type="binding site" evidence="1">
    <location>
        <position position="190"/>
    </location>
    <ligand>
        <name>Zn(2+)</name>
        <dbReference type="ChEBI" id="CHEBI:29105"/>
        <note>catalytic</note>
    </ligand>
</feature>